<name>RP07_VACCW</name>
<organism>
    <name type="scientific">Vaccinia virus (strain Western Reserve)</name>
    <name type="common">VACV</name>
    <name type="synonym">Vaccinia virus (strain WR)</name>
    <dbReference type="NCBI Taxonomy" id="10254"/>
    <lineage>
        <taxon>Viruses</taxon>
        <taxon>Varidnaviria</taxon>
        <taxon>Bamfordvirae</taxon>
        <taxon>Nucleocytoviricota</taxon>
        <taxon>Pokkesviricetes</taxon>
        <taxon>Chitovirales</taxon>
        <taxon>Poxviridae</taxon>
        <taxon>Chordopoxvirinae</taxon>
        <taxon>Orthopoxvirus</taxon>
        <taxon>Vaccinia virus</taxon>
    </lineage>
</organism>
<sequence length="63" mass="7288">MVFQLVCSTCGKDISHERYKLIIRKKSLKDVLVSVKNECCRLKLSTQIEPQRNLTVQPLLDIN</sequence>
<dbReference type="EC" id="2.7.7.6"/>
<dbReference type="EMBL" id="M85279">
    <property type="protein sequence ID" value="AAA48319.1"/>
    <property type="molecule type" value="Genomic_DNA"/>
</dbReference>
<dbReference type="EMBL" id="J03399">
    <property type="protein sequence ID" value="AAB59816.1"/>
    <property type="molecule type" value="Genomic_DNA"/>
</dbReference>
<dbReference type="EMBL" id="AY243312">
    <property type="protein sequence ID" value="AAO89362.1"/>
    <property type="molecule type" value="Genomic_DNA"/>
</dbReference>
<dbReference type="RefSeq" id="YP_232965.1">
    <property type="nucleotide sequence ID" value="NC_006998.1"/>
</dbReference>
<dbReference type="PDB" id="8C8H">
    <property type="method" value="EM"/>
    <property type="resolution" value="3.84 A"/>
    <property type="chains" value="J=1-63"/>
</dbReference>
<dbReference type="PDBsum" id="8C8H"/>
<dbReference type="EMDB" id="EMD-16476"/>
<dbReference type="SMR" id="P68317"/>
<dbReference type="DNASU" id="3707539"/>
<dbReference type="GeneID" id="3707539"/>
<dbReference type="KEGG" id="vg:3707539"/>
<dbReference type="Proteomes" id="UP000000344">
    <property type="component" value="Genome"/>
</dbReference>
<dbReference type="GO" id="GO:0000428">
    <property type="term" value="C:DNA-directed RNA polymerase complex"/>
    <property type="evidence" value="ECO:0007669"/>
    <property type="project" value="UniProtKB-KW"/>
</dbReference>
<dbReference type="GO" id="GO:0044423">
    <property type="term" value="C:virion component"/>
    <property type="evidence" value="ECO:0007669"/>
    <property type="project" value="UniProtKB-KW"/>
</dbReference>
<dbReference type="GO" id="GO:0003677">
    <property type="term" value="F:DNA binding"/>
    <property type="evidence" value="ECO:0007669"/>
    <property type="project" value="InterPro"/>
</dbReference>
<dbReference type="GO" id="GO:0003899">
    <property type="term" value="F:DNA-directed RNA polymerase activity"/>
    <property type="evidence" value="ECO:0007669"/>
    <property type="project" value="UniProtKB-EC"/>
</dbReference>
<dbReference type="GO" id="GO:0006351">
    <property type="term" value="P:DNA-templated transcription"/>
    <property type="evidence" value="ECO:0007669"/>
    <property type="project" value="InterPro"/>
</dbReference>
<dbReference type="InterPro" id="IPR008448">
    <property type="entry name" value="RNA_pol_7kDa_chordopoxvir"/>
</dbReference>
<dbReference type="Pfam" id="PF05864">
    <property type="entry name" value="Chordopox_RPO7"/>
    <property type="match status" value="1"/>
</dbReference>
<reference key="1">
    <citation type="journal article" date="1992" name="J. Virol.">
        <title>Characterization of a 7-kilodalton subunit of vaccinia virus DNA-dependent RNA polymerase with structural similarities to the smallest subunit of eukaryotic RNA polymerase II.</title>
        <authorList>
            <person name="Amegadzie B.Y."/>
            <person name="Ahn B.-Y."/>
            <person name="Moss B."/>
        </authorList>
    </citation>
    <scope>NUCLEOTIDE SEQUENCE [GENOMIC DNA]</scope>
    <scope>PROTEIN SEQUENCE OF 44-51 AND 53-62</scope>
    <scope>CHARACTERIZATION</scope>
    <scope>INDUCTION</scope>
</reference>
<reference key="2">
    <citation type="journal article" date="1988" name="J. Virol.">
        <title>Sequence and transcriptional analysis of the vaccinia virus HindIII I fragment.</title>
        <authorList>
            <person name="Schmitt J.F.C."/>
            <person name="Stunnenberg H.G."/>
        </authorList>
    </citation>
    <scope>NUCLEOTIDE SEQUENCE [GENOMIC DNA]</scope>
</reference>
<reference key="3">
    <citation type="submission" date="2003-02" db="EMBL/GenBank/DDBJ databases">
        <title>Sequencing of the coding region of Vaccinia-WR to an average 9-fold redundancy and an error rate of 0.16/10kb.</title>
        <authorList>
            <person name="Esposito J.J."/>
            <person name="Frace A.M."/>
            <person name="Sammons S.A."/>
            <person name="Olsen-Rasmussen M."/>
            <person name="Osborne J."/>
            <person name="Wohlhueter R."/>
        </authorList>
    </citation>
    <scope>NUCLEOTIDE SEQUENCE [LARGE SCALE GENOMIC DNA]</scope>
</reference>
<reference key="4">
    <citation type="journal article" date="2003" name="J. Gen. Virol.">
        <title>Vaccinia virus transcription.</title>
        <authorList>
            <person name="Broyles S.S."/>
        </authorList>
    </citation>
    <scope>REVIEW</scope>
</reference>
<reference key="5">
    <citation type="journal article" date="2009" name="J. Virol.">
        <title>Interaction of the vaccinia virus RNA polymerase-associated 94-kilodalton protein with the early transcription factor.</title>
        <authorList>
            <person name="Yang Z."/>
            <person name="Moss B."/>
        </authorList>
    </citation>
    <scope>FUNCTION</scope>
</reference>
<reference key="6">
    <citation type="journal article" date="2015" name="J. Virol.">
        <title>Deciphering poxvirus gene expression by RNA sequencing and ribosome profiling.</title>
        <authorList>
            <person name="Yang Z."/>
            <person name="Cao S."/>
            <person name="Martens C.A."/>
            <person name="Porcella S.F."/>
            <person name="Xie Z."/>
            <person name="Ma M."/>
            <person name="Shen B."/>
            <person name="Moss B."/>
        </authorList>
    </citation>
    <scope>INDUCTION</scope>
</reference>
<accession>P68317</accession>
<accession>Q76ZU0</accession>
<accession>Q89560</accession>
<comment type="function">
    <text evidence="2">Part of the DNA-dependent RNA polymerase which catalyzes the transcription of viral DNA into RNA using the four ribonucleoside triphosphates as substrates. Responsible for the transcription of early, intermediate and late genes. DNA-dependent RNA polymerase associates with the early transcription factor (ETF), itself composed of OPG118/D6 and OPG134/A8, thereby allowing the early genes transcription. Late transcription, and probably also intermediate transcription, require newly synthesized RNA polymerase.</text>
</comment>
<comment type="catalytic activity">
    <reaction>
        <text>RNA(n) + a ribonucleoside 5'-triphosphate = RNA(n+1) + diphosphate</text>
        <dbReference type="Rhea" id="RHEA:21248"/>
        <dbReference type="Rhea" id="RHEA-COMP:14527"/>
        <dbReference type="Rhea" id="RHEA-COMP:17342"/>
        <dbReference type="ChEBI" id="CHEBI:33019"/>
        <dbReference type="ChEBI" id="CHEBI:61557"/>
        <dbReference type="ChEBI" id="CHEBI:140395"/>
        <dbReference type="EC" id="2.7.7.6"/>
    </reaction>
</comment>
<comment type="subunit">
    <text>The DNA-dependent RNA polymerase (vRNAP) consists of eight subunits encoded by early viral genes and termed according to their apparent molecular masses Rpo147, Rpo132, Rpo35, Rpo30, Rpo22, Rpo19, Rpo18, and Rpo7. The same holoenzyme, with the addition of the transcription-specificity factor RAP94, is used for early gene expression.</text>
</comment>
<comment type="subcellular location">
    <subcellularLocation>
        <location evidence="4">Virion</location>
    </subcellularLocation>
    <text>All the enzymes and other proteins required to synthesize early mRNAs are packaged within the virion core along with the DNA genome. This is necessary because viral early mRNAs are synthesized within minutes after virus entry into the cell and are extruded through pores in the core particle.</text>
</comment>
<comment type="induction">
    <text evidence="1 3">Expressed in the early phase of the viral replicative cycle.</text>
</comment>
<comment type="similarity">
    <text evidence="4">Belongs to the poxviridae DNA-directed RNA polymerase 7 kDa subunit family.</text>
</comment>
<protein>
    <recommendedName>
        <fullName>DNA-directed RNA polymerase 7 kDa subunit</fullName>
        <ecNumber>2.7.7.6</ecNumber>
    </recommendedName>
</protein>
<evidence type="ECO:0000269" key="1">
    <source>
    </source>
</evidence>
<evidence type="ECO:0000269" key="2">
    <source>
    </source>
</evidence>
<evidence type="ECO:0000269" key="3">
    <source>
    </source>
</evidence>
<evidence type="ECO:0000305" key="4"/>
<gene>
    <name type="primary">OPG090</name>
    <name type="synonym">RPO7</name>
    <name type="ordered locus">VACWR083</name>
    <name type="ORF">G5.5R</name>
</gene>
<keyword id="KW-0002">3D-structure</keyword>
<keyword id="KW-0903">Direct protein sequencing</keyword>
<keyword id="KW-0240">DNA-directed RNA polymerase</keyword>
<keyword id="KW-0244">Early protein</keyword>
<keyword id="KW-0548">Nucleotidyltransferase</keyword>
<keyword id="KW-1185">Reference proteome</keyword>
<keyword id="KW-0804">Transcription</keyword>
<keyword id="KW-0808">Transferase</keyword>
<keyword id="KW-0946">Virion</keyword>
<proteinExistence type="evidence at protein level"/>
<feature type="chain" id="PRO_0000099158" description="DNA-directed RNA polymerase 7 kDa subunit">
    <location>
        <begin position="1"/>
        <end position="63"/>
    </location>
</feature>
<organismHost>
    <name type="scientific">Bos taurus</name>
    <name type="common">Bovine</name>
    <dbReference type="NCBI Taxonomy" id="9913"/>
</organismHost>